<comment type="function">
    <text evidence="3">Releases the N-terminal proline from various substrates. Cleaves Pro-betaNA (L-prolyl-beta-naphthylamide) effectively.</text>
</comment>
<comment type="catalytic activity">
    <reaction evidence="3">
        <text>Release of N-terminal proline from a peptide.</text>
        <dbReference type="EC" id="3.4.11.5"/>
    </reaction>
</comment>
<comment type="activity regulation">
    <text evidence="3">Inhibited by 3,4-DCI, but no significant effect on enzyme activity by pepstatin A, E-64, 1,10-phenanthroline or EDTA.</text>
</comment>
<comment type="subunit">
    <text evidence="1">Homotrimer.</text>
</comment>
<comment type="subcellular location">
    <subcellularLocation>
        <location evidence="4">Cell envelope</location>
    </subcellularLocation>
</comment>
<comment type="similarity">
    <text evidence="4">Belongs to the peptidase S33 family.</text>
</comment>
<keyword id="KW-0031">Aminopeptidase</keyword>
<keyword id="KW-0378">Hydrolase</keyword>
<keyword id="KW-0645">Protease</keyword>
<accession>P46542</accession>
<sequence>MQITEKYLPFGNWQTYCRIVGEATDRAPLLLLHGGPGSSHNYFEVLDQVAEKSGRQVIMYDQLGCGNSSIPDDQAETAYTAQTWVKELENVREQLGLDQIHLLGQSWGGMLALIYLCDYQPKGVKSLILSSTLASAKLWSQELHRLIKYLPKGEQAAIKEAETTGNYDSPAYQAANAHFMDQHAINVTPDLPEPVLRKKKGGNLAYLTGWGPNEYTPIGNLHGYEYTDRLKDLDLPALITSGTDDLCTPLVAKSMYDHLPNARWELFAGCGHMPFVQENAKYQELLSDWLISQD</sequence>
<reference key="1">
    <citation type="journal article" date="1994" name="Microbiology">
        <title>Cloning, heterologous expression, and sequencing of a novel proline iminopeptidase gene, pepI, from Lactobacillus delbrueckii subsp. lactis DSM 7290.</title>
        <authorList>
            <person name="Klein J.R."/>
            <person name="Schmidt U."/>
            <person name="Plapp R."/>
        </authorList>
    </citation>
    <scope>NUCLEOTIDE SEQUENCE [GENOMIC DNA]</scope>
    <scope>FUNCTION</scope>
    <scope>CATALYTIC ACTIVITY</scope>
    <scope>ACTIVITY REGULATION</scope>
    <source>
        <strain>DSM 7290</strain>
    </source>
</reference>
<proteinExistence type="evidence at protein level"/>
<dbReference type="EC" id="3.4.11.5"/>
<dbReference type="EMBL" id="Z26948">
    <property type="protein sequence ID" value="CAA81556.1"/>
    <property type="molecule type" value="Genomic_DNA"/>
</dbReference>
<dbReference type="PIR" id="A59087">
    <property type="entry name" value="A59087"/>
</dbReference>
<dbReference type="SMR" id="P46542"/>
<dbReference type="ESTHER" id="lacdl-pip">
    <property type="family name" value="Proline_iminopeptidase"/>
</dbReference>
<dbReference type="MEROPS" id="S33.021"/>
<dbReference type="GO" id="GO:0030313">
    <property type="term" value="C:cell envelope"/>
    <property type="evidence" value="ECO:0007669"/>
    <property type="project" value="UniProtKB-SubCell"/>
</dbReference>
<dbReference type="GO" id="GO:0016020">
    <property type="term" value="C:membrane"/>
    <property type="evidence" value="ECO:0007669"/>
    <property type="project" value="TreeGrafter"/>
</dbReference>
<dbReference type="GO" id="GO:0004177">
    <property type="term" value="F:aminopeptidase activity"/>
    <property type="evidence" value="ECO:0007669"/>
    <property type="project" value="UniProtKB-KW"/>
</dbReference>
<dbReference type="GO" id="GO:0006508">
    <property type="term" value="P:proteolysis"/>
    <property type="evidence" value="ECO:0007669"/>
    <property type="project" value="UniProtKB-KW"/>
</dbReference>
<dbReference type="Gene3D" id="3.40.50.1820">
    <property type="entry name" value="alpha/beta hydrolase"/>
    <property type="match status" value="1"/>
</dbReference>
<dbReference type="InterPro" id="IPR000073">
    <property type="entry name" value="AB_hydrolase_1"/>
</dbReference>
<dbReference type="InterPro" id="IPR029058">
    <property type="entry name" value="AB_hydrolase_fold"/>
</dbReference>
<dbReference type="InterPro" id="IPR050266">
    <property type="entry name" value="AB_hydrolase_sf"/>
</dbReference>
<dbReference type="InterPro" id="IPR002410">
    <property type="entry name" value="Peptidase_S33"/>
</dbReference>
<dbReference type="InterPro" id="IPR005945">
    <property type="entry name" value="Pro_imino_pep"/>
</dbReference>
<dbReference type="NCBIfam" id="TIGR01250">
    <property type="entry name" value="pro_imino_pep_2"/>
    <property type="match status" value="1"/>
</dbReference>
<dbReference type="NCBIfam" id="NF045945">
    <property type="entry name" value="ProImpepLactob"/>
    <property type="match status" value="1"/>
</dbReference>
<dbReference type="PANTHER" id="PTHR43798:SF33">
    <property type="entry name" value="HYDROLASE, PUTATIVE (AFU_ORTHOLOGUE AFUA_2G14860)-RELATED"/>
    <property type="match status" value="1"/>
</dbReference>
<dbReference type="PANTHER" id="PTHR43798">
    <property type="entry name" value="MONOACYLGLYCEROL LIPASE"/>
    <property type="match status" value="1"/>
</dbReference>
<dbReference type="Pfam" id="PF00561">
    <property type="entry name" value="Abhydrolase_1"/>
    <property type="match status" value="1"/>
</dbReference>
<dbReference type="PIRSF" id="PIRSF005539">
    <property type="entry name" value="Pept_S33_TRI_F1"/>
    <property type="match status" value="1"/>
</dbReference>
<dbReference type="PRINTS" id="PR00793">
    <property type="entry name" value="PROAMNOPTASE"/>
</dbReference>
<dbReference type="SUPFAM" id="SSF53474">
    <property type="entry name" value="alpha/beta-Hydrolases"/>
    <property type="match status" value="1"/>
</dbReference>
<gene>
    <name type="primary">pip</name>
    <name type="synonym">pepI</name>
</gene>
<protein>
    <recommendedName>
        <fullName>Proline iminopeptidase</fullName>
        <shortName>PIP</shortName>
        <ecNumber>3.4.11.5</ecNumber>
    </recommendedName>
    <alternativeName>
        <fullName>Prolyl aminopeptidase</fullName>
        <shortName>PAP</shortName>
    </alternativeName>
</protein>
<evidence type="ECO:0000250" key="1"/>
<evidence type="ECO:0000255" key="2"/>
<evidence type="ECO:0000269" key="3">
    <source>
    </source>
</evidence>
<evidence type="ECO:0000305" key="4"/>
<organism>
    <name type="scientific">Lactobacillus delbrueckii subsp. lactis</name>
    <dbReference type="NCBI Taxonomy" id="29397"/>
    <lineage>
        <taxon>Bacteria</taxon>
        <taxon>Bacillati</taxon>
        <taxon>Bacillota</taxon>
        <taxon>Bacilli</taxon>
        <taxon>Lactobacillales</taxon>
        <taxon>Lactobacillaceae</taxon>
        <taxon>Lactobacillus</taxon>
    </lineage>
</organism>
<name>PIP_LACDL</name>
<feature type="chain" id="PRO_0000080837" description="Proline iminopeptidase">
    <location>
        <begin position="1"/>
        <end position="294"/>
    </location>
</feature>
<feature type="domain" description="AB hydrolase-1" evidence="2">
    <location>
        <begin position="28"/>
        <end position="278"/>
    </location>
</feature>
<feature type="active site" description="Nucleophile" evidence="1">
    <location>
        <position position="106"/>
    </location>
</feature>
<feature type="active site" evidence="1">
    <location>
        <position position="245"/>
    </location>
</feature>
<feature type="active site" description="Proton donor" evidence="1">
    <location>
        <position position="272"/>
    </location>
</feature>